<name>DAPB_RICCN</name>
<evidence type="ECO:0000255" key="1">
    <source>
        <dbReference type="HAMAP-Rule" id="MF_00102"/>
    </source>
</evidence>
<evidence type="ECO:0000305" key="2"/>
<sequence length="239" mass="26479">MLNIGLSGSTGKMGETILERIDKFKDCKIAAKFNSTNNLDDLDNFCKNSDVIIDFSTPEILEKLINYALKHNTKLVIGTTGLQPQHFKLLEKAAQTLPVLYSANMSIGANLLSYLAKEVTKILDDYDVEILETHHRNKKDSPSGTAVMLAETIASKKGLNITFNRGNRLRSEKEIGISSLRGGNVHGIHEISFLGDDEIITLKHEALNKNSFSIGAIKAAIWLQDKPSALYSMQDIYKI</sequence>
<reference key="1">
    <citation type="journal article" date="2001" name="Science">
        <title>Mechanisms of evolution in Rickettsia conorii and R. prowazekii.</title>
        <authorList>
            <person name="Ogata H."/>
            <person name="Audic S."/>
            <person name="Renesto-Audiffren P."/>
            <person name="Fournier P.-E."/>
            <person name="Barbe V."/>
            <person name="Samson D."/>
            <person name="Roux V."/>
            <person name="Cossart P."/>
            <person name="Weissenbach J."/>
            <person name="Claverie J.-M."/>
            <person name="Raoult D."/>
        </authorList>
    </citation>
    <scope>NUCLEOTIDE SEQUENCE [LARGE SCALE GENOMIC DNA]</scope>
    <source>
        <strain>ATCC VR-613 / Malish 7</strain>
    </source>
</reference>
<accession>Q92J79</accession>
<dbReference type="EC" id="1.17.1.8" evidence="1"/>
<dbReference type="EMBL" id="AE006914">
    <property type="protein sequence ID" value="AAL02728.1"/>
    <property type="status" value="ALT_INIT"/>
    <property type="molecule type" value="Genomic_DNA"/>
</dbReference>
<dbReference type="PIR" id="F97723">
    <property type="entry name" value="F97723"/>
</dbReference>
<dbReference type="RefSeq" id="WP_012150406.1">
    <property type="nucleotide sequence ID" value="NC_003103.1"/>
</dbReference>
<dbReference type="SMR" id="Q92J79"/>
<dbReference type="GeneID" id="928002"/>
<dbReference type="KEGG" id="rco:RC0190"/>
<dbReference type="HOGENOM" id="CLU_047479_2_2_5"/>
<dbReference type="UniPathway" id="UPA00034">
    <property type="reaction ID" value="UER00018"/>
</dbReference>
<dbReference type="Proteomes" id="UP000000816">
    <property type="component" value="Chromosome"/>
</dbReference>
<dbReference type="GO" id="GO:0005829">
    <property type="term" value="C:cytosol"/>
    <property type="evidence" value="ECO:0007669"/>
    <property type="project" value="TreeGrafter"/>
</dbReference>
<dbReference type="GO" id="GO:0008839">
    <property type="term" value="F:4-hydroxy-tetrahydrodipicolinate reductase"/>
    <property type="evidence" value="ECO:0007669"/>
    <property type="project" value="UniProtKB-EC"/>
</dbReference>
<dbReference type="GO" id="GO:0051287">
    <property type="term" value="F:NAD binding"/>
    <property type="evidence" value="ECO:0007669"/>
    <property type="project" value="UniProtKB-UniRule"/>
</dbReference>
<dbReference type="GO" id="GO:0050661">
    <property type="term" value="F:NADP binding"/>
    <property type="evidence" value="ECO:0007669"/>
    <property type="project" value="UniProtKB-UniRule"/>
</dbReference>
<dbReference type="GO" id="GO:0016726">
    <property type="term" value="F:oxidoreductase activity, acting on CH or CH2 groups, NAD or NADP as acceptor"/>
    <property type="evidence" value="ECO:0007669"/>
    <property type="project" value="UniProtKB-UniRule"/>
</dbReference>
<dbReference type="GO" id="GO:0019877">
    <property type="term" value="P:diaminopimelate biosynthetic process"/>
    <property type="evidence" value="ECO:0007669"/>
    <property type="project" value="UniProtKB-UniRule"/>
</dbReference>
<dbReference type="GO" id="GO:0009089">
    <property type="term" value="P:lysine biosynthetic process via diaminopimelate"/>
    <property type="evidence" value="ECO:0007669"/>
    <property type="project" value="UniProtKB-UniRule"/>
</dbReference>
<dbReference type="CDD" id="cd02274">
    <property type="entry name" value="DHDPR_N"/>
    <property type="match status" value="1"/>
</dbReference>
<dbReference type="Gene3D" id="3.30.360.10">
    <property type="entry name" value="Dihydrodipicolinate Reductase, domain 2"/>
    <property type="match status" value="1"/>
</dbReference>
<dbReference type="Gene3D" id="3.40.50.720">
    <property type="entry name" value="NAD(P)-binding Rossmann-like Domain"/>
    <property type="match status" value="1"/>
</dbReference>
<dbReference type="HAMAP" id="MF_00102">
    <property type="entry name" value="DapB"/>
    <property type="match status" value="1"/>
</dbReference>
<dbReference type="InterPro" id="IPR022663">
    <property type="entry name" value="DapB_C"/>
</dbReference>
<dbReference type="InterPro" id="IPR000846">
    <property type="entry name" value="DapB_N"/>
</dbReference>
<dbReference type="InterPro" id="IPR022664">
    <property type="entry name" value="DapB_N_CS"/>
</dbReference>
<dbReference type="InterPro" id="IPR023940">
    <property type="entry name" value="DHDPR_bac"/>
</dbReference>
<dbReference type="InterPro" id="IPR036291">
    <property type="entry name" value="NAD(P)-bd_dom_sf"/>
</dbReference>
<dbReference type="NCBIfam" id="TIGR00036">
    <property type="entry name" value="dapB"/>
    <property type="match status" value="1"/>
</dbReference>
<dbReference type="PANTHER" id="PTHR20836:SF0">
    <property type="entry name" value="4-HYDROXY-TETRAHYDRODIPICOLINATE REDUCTASE 1, CHLOROPLASTIC-RELATED"/>
    <property type="match status" value="1"/>
</dbReference>
<dbReference type="PANTHER" id="PTHR20836">
    <property type="entry name" value="DIHYDRODIPICOLINATE REDUCTASE"/>
    <property type="match status" value="1"/>
</dbReference>
<dbReference type="Pfam" id="PF05173">
    <property type="entry name" value="DapB_C"/>
    <property type="match status" value="1"/>
</dbReference>
<dbReference type="Pfam" id="PF01113">
    <property type="entry name" value="DapB_N"/>
    <property type="match status" value="1"/>
</dbReference>
<dbReference type="PIRSF" id="PIRSF000161">
    <property type="entry name" value="DHPR"/>
    <property type="match status" value="1"/>
</dbReference>
<dbReference type="SUPFAM" id="SSF55347">
    <property type="entry name" value="Glyceraldehyde-3-phosphate dehydrogenase-like, C-terminal domain"/>
    <property type="match status" value="1"/>
</dbReference>
<dbReference type="SUPFAM" id="SSF51735">
    <property type="entry name" value="NAD(P)-binding Rossmann-fold domains"/>
    <property type="match status" value="1"/>
</dbReference>
<dbReference type="PROSITE" id="PS01298">
    <property type="entry name" value="DAPB"/>
    <property type="match status" value="1"/>
</dbReference>
<keyword id="KW-0028">Amino-acid biosynthesis</keyword>
<keyword id="KW-0963">Cytoplasm</keyword>
<keyword id="KW-0220">Diaminopimelate biosynthesis</keyword>
<keyword id="KW-0457">Lysine biosynthesis</keyword>
<keyword id="KW-0520">NAD</keyword>
<keyword id="KW-0521">NADP</keyword>
<keyword id="KW-0560">Oxidoreductase</keyword>
<gene>
    <name evidence="1" type="primary">dapB</name>
    <name type="ordered locus">RC0190</name>
</gene>
<feature type="chain" id="PRO_0000141479" description="4-hydroxy-tetrahydrodipicolinate reductase">
    <location>
        <begin position="1"/>
        <end position="239"/>
    </location>
</feature>
<feature type="active site" description="Proton donor/acceptor" evidence="1">
    <location>
        <position position="134"/>
    </location>
</feature>
<feature type="active site" description="Proton donor" evidence="1">
    <location>
        <position position="138"/>
    </location>
</feature>
<feature type="binding site" evidence="1">
    <location>
        <begin position="8"/>
        <end position="13"/>
    </location>
    <ligand>
        <name>NAD(+)</name>
        <dbReference type="ChEBI" id="CHEBI:57540"/>
    </ligand>
</feature>
<feature type="binding site" evidence="1">
    <location>
        <begin position="78"/>
        <end position="80"/>
    </location>
    <ligand>
        <name>NAD(+)</name>
        <dbReference type="ChEBI" id="CHEBI:57540"/>
    </ligand>
</feature>
<feature type="binding site" evidence="1">
    <location>
        <begin position="102"/>
        <end position="105"/>
    </location>
    <ligand>
        <name>NAD(+)</name>
        <dbReference type="ChEBI" id="CHEBI:57540"/>
    </ligand>
</feature>
<feature type="binding site" evidence="1">
    <location>
        <position position="135"/>
    </location>
    <ligand>
        <name>(S)-2,3,4,5-tetrahydrodipicolinate</name>
        <dbReference type="ChEBI" id="CHEBI:16845"/>
    </ligand>
</feature>
<feature type="binding site" evidence="1">
    <location>
        <begin position="144"/>
        <end position="145"/>
    </location>
    <ligand>
        <name>(S)-2,3,4,5-tetrahydrodipicolinate</name>
        <dbReference type="ChEBI" id="CHEBI:16845"/>
    </ligand>
</feature>
<proteinExistence type="inferred from homology"/>
<organism>
    <name type="scientific">Rickettsia conorii (strain ATCC VR-613 / Malish 7)</name>
    <dbReference type="NCBI Taxonomy" id="272944"/>
    <lineage>
        <taxon>Bacteria</taxon>
        <taxon>Pseudomonadati</taxon>
        <taxon>Pseudomonadota</taxon>
        <taxon>Alphaproteobacteria</taxon>
        <taxon>Rickettsiales</taxon>
        <taxon>Rickettsiaceae</taxon>
        <taxon>Rickettsieae</taxon>
        <taxon>Rickettsia</taxon>
        <taxon>spotted fever group</taxon>
    </lineage>
</organism>
<protein>
    <recommendedName>
        <fullName evidence="1">4-hydroxy-tetrahydrodipicolinate reductase</fullName>
        <shortName evidence="1">HTPA reductase</shortName>
        <ecNumber evidence="1">1.17.1.8</ecNumber>
    </recommendedName>
</protein>
<comment type="function">
    <text evidence="1">Catalyzes the conversion of 4-hydroxy-tetrahydrodipicolinate (HTPA) to tetrahydrodipicolinate.</text>
</comment>
<comment type="catalytic activity">
    <reaction evidence="1">
        <text>(S)-2,3,4,5-tetrahydrodipicolinate + NAD(+) + H2O = (2S,4S)-4-hydroxy-2,3,4,5-tetrahydrodipicolinate + NADH + H(+)</text>
        <dbReference type="Rhea" id="RHEA:35323"/>
        <dbReference type="ChEBI" id="CHEBI:15377"/>
        <dbReference type="ChEBI" id="CHEBI:15378"/>
        <dbReference type="ChEBI" id="CHEBI:16845"/>
        <dbReference type="ChEBI" id="CHEBI:57540"/>
        <dbReference type="ChEBI" id="CHEBI:57945"/>
        <dbReference type="ChEBI" id="CHEBI:67139"/>
        <dbReference type="EC" id="1.17.1.8"/>
    </reaction>
</comment>
<comment type="catalytic activity">
    <reaction evidence="1">
        <text>(S)-2,3,4,5-tetrahydrodipicolinate + NADP(+) + H2O = (2S,4S)-4-hydroxy-2,3,4,5-tetrahydrodipicolinate + NADPH + H(+)</text>
        <dbReference type="Rhea" id="RHEA:35331"/>
        <dbReference type="ChEBI" id="CHEBI:15377"/>
        <dbReference type="ChEBI" id="CHEBI:15378"/>
        <dbReference type="ChEBI" id="CHEBI:16845"/>
        <dbReference type="ChEBI" id="CHEBI:57783"/>
        <dbReference type="ChEBI" id="CHEBI:58349"/>
        <dbReference type="ChEBI" id="CHEBI:67139"/>
        <dbReference type="EC" id="1.17.1.8"/>
    </reaction>
</comment>
<comment type="pathway">
    <text evidence="1">Amino-acid biosynthesis; L-lysine biosynthesis via DAP pathway; (S)-tetrahydrodipicolinate from L-aspartate: step 4/4.</text>
</comment>
<comment type="subcellular location">
    <subcellularLocation>
        <location evidence="1">Cytoplasm</location>
    </subcellularLocation>
</comment>
<comment type="similarity">
    <text evidence="1">Belongs to the DapB family.</text>
</comment>
<comment type="caution">
    <text evidence="2">Was originally thought to be a dihydrodipicolinate reductase (DHDPR), catalyzing the conversion of dihydrodipicolinate to tetrahydrodipicolinate. However, it was shown in E.coli that the substrate of the enzymatic reaction is not dihydrodipicolinate (DHDP) but in fact (2S,4S)-4-hydroxy-2,3,4,5-tetrahydrodipicolinic acid (HTPA), the product released by the DapA-catalyzed reaction.</text>
</comment>
<comment type="sequence caution" evidence="2">
    <conflict type="erroneous initiation">
        <sequence resource="EMBL-CDS" id="AAL02728"/>
    </conflict>
</comment>